<dbReference type="EC" id="3.2.2.9" evidence="1"/>
<dbReference type="EMBL" id="CR954246">
    <property type="protein sequence ID" value="CAI85635.1"/>
    <property type="molecule type" value="Genomic_DNA"/>
</dbReference>
<dbReference type="SMR" id="Q3ILJ7"/>
<dbReference type="STRING" id="326442.PSHAa0547"/>
<dbReference type="KEGG" id="pha:PSHAa0547"/>
<dbReference type="eggNOG" id="COG0775">
    <property type="taxonomic scope" value="Bacteria"/>
</dbReference>
<dbReference type="HOGENOM" id="CLU_031248_2_2_6"/>
<dbReference type="BioCyc" id="PHAL326442:PSHA_RS02665-MONOMER"/>
<dbReference type="UniPathway" id="UPA00904">
    <property type="reaction ID" value="UER00871"/>
</dbReference>
<dbReference type="Proteomes" id="UP000006843">
    <property type="component" value="Chromosome I"/>
</dbReference>
<dbReference type="GO" id="GO:0005829">
    <property type="term" value="C:cytosol"/>
    <property type="evidence" value="ECO:0007669"/>
    <property type="project" value="TreeGrafter"/>
</dbReference>
<dbReference type="GO" id="GO:0008782">
    <property type="term" value="F:adenosylhomocysteine nucleosidase activity"/>
    <property type="evidence" value="ECO:0007669"/>
    <property type="project" value="UniProtKB-UniRule"/>
</dbReference>
<dbReference type="GO" id="GO:0008930">
    <property type="term" value="F:methylthioadenosine nucleosidase activity"/>
    <property type="evidence" value="ECO:0007669"/>
    <property type="project" value="UniProtKB-UniRule"/>
</dbReference>
<dbReference type="GO" id="GO:0019509">
    <property type="term" value="P:L-methionine salvage from methylthioadenosine"/>
    <property type="evidence" value="ECO:0007669"/>
    <property type="project" value="UniProtKB-UniRule"/>
</dbReference>
<dbReference type="GO" id="GO:0019284">
    <property type="term" value="P:L-methionine salvage from S-adenosylmethionine"/>
    <property type="evidence" value="ECO:0007669"/>
    <property type="project" value="TreeGrafter"/>
</dbReference>
<dbReference type="GO" id="GO:0009164">
    <property type="term" value="P:nucleoside catabolic process"/>
    <property type="evidence" value="ECO:0007669"/>
    <property type="project" value="InterPro"/>
</dbReference>
<dbReference type="CDD" id="cd09008">
    <property type="entry name" value="MTAN"/>
    <property type="match status" value="1"/>
</dbReference>
<dbReference type="FunFam" id="3.40.50.1580:FF:000001">
    <property type="entry name" value="MTA/SAH nucleosidase family protein"/>
    <property type="match status" value="1"/>
</dbReference>
<dbReference type="Gene3D" id="3.40.50.1580">
    <property type="entry name" value="Nucleoside phosphorylase domain"/>
    <property type="match status" value="1"/>
</dbReference>
<dbReference type="HAMAP" id="MF_01684">
    <property type="entry name" value="Salvage_MtnN"/>
    <property type="match status" value="1"/>
</dbReference>
<dbReference type="InterPro" id="IPR010049">
    <property type="entry name" value="MTA_SAH_Nsdase"/>
</dbReference>
<dbReference type="InterPro" id="IPR000845">
    <property type="entry name" value="Nucleoside_phosphorylase_d"/>
</dbReference>
<dbReference type="InterPro" id="IPR035994">
    <property type="entry name" value="Nucleoside_phosphorylase_sf"/>
</dbReference>
<dbReference type="NCBIfam" id="TIGR01704">
    <property type="entry name" value="MTA_SAH-Nsdase"/>
    <property type="match status" value="1"/>
</dbReference>
<dbReference type="NCBIfam" id="NF004079">
    <property type="entry name" value="PRK05584.1"/>
    <property type="match status" value="1"/>
</dbReference>
<dbReference type="PANTHER" id="PTHR46832">
    <property type="entry name" value="5'-METHYLTHIOADENOSINE/S-ADENOSYLHOMOCYSTEINE NUCLEOSIDASE"/>
    <property type="match status" value="1"/>
</dbReference>
<dbReference type="PANTHER" id="PTHR46832:SF1">
    <property type="entry name" value="5'-METHYLTHIOADENOSINE_S-ADENOSYLHOMOCYSTEINE NUCLEOSIDASE"/>
    <property type="match status" value="1"/>
</dbReference>
<dbReference type="Pfam" id="PF01048">
    <property type="entry name" value="PNP_UDP_1"/>
    <property type="match status" value="1"/>
</dbReference>
<dbReference type="SUPFAM" id="SSF53167">
    <property type="entry name" value="Purine and uridine phosphorylases"/>
    <property type="match status" value="1"/>
</dbReference>
<sequence length="235" mass="24883">MNVGIIGAMEPEVKILREAMQNPQTLTKAGFTFYTGELAGNTVTLVQSGIGKVASTIATTLLIDNFAPDCVINTGSAGGFDPSLNVGDVVISSEVRHHDVDVTAFGYEIGQVPQMPAGFAAHPKLVAAAEQTIAQISDVKTLVGLICTGDIFMCDPIRIEKARSDFPTMLAVEMEGASIAQTCHTLNTPFVVIRSMSDIAGKESPQSFEEYLETASINSSKMVVALLEKLTAVSL</sequence>
<feature type="chain" id="PRO_0000359324" description="5'-methylthioadenosine/S-adenosylhomocysteine nucleosidase">
    <location>
        <begin position="1"/>
        <end position="235"/>
    </location>
</feature>
<feature type="active site" description="Proton acceptor" evidence="1">
    <location>
        <position position="12"/>
    </location>
</feature>
<feature type="active site" description="Proton donor" evidence="1">
    <location>
        <position position="198"/>
    </location>
</feature>
<feature type="binding site" evidence="1">
    <location>
        <position position="78"/>
    </location>
    <ligand>
        <name>substrate</name>
    </ligand>
</feature>
<feature type="binding site" evidence="1">
    <location>
        <position position="153"/>
    </location>
    <ligand>
        <name>substrate</name>
    </ligand>
</feature>
<feature type="binding site" evidence="1">
    <location>
        <begin position="174"/>
        <end position="175"/>
    </location>
    <ligand>
        <name>substrate</name>
    </ligand>
</feature>
<protein>
    <recommendedName>
        <fullName evidence="1">5'-methylthioadenosine/S-adenosylhomocysteine nucleosidase</fullName>
        <shortName evidence="1">MTA/SAH nucleosidase</shortName>
        <shortName evidence="1">MTAN</shortName>
        <ecNumber evidence="1">3.2.2.9</ecNumber>
    </recommendedName>
    <alternativeName>
        <fullName evidence="1">5'-deoxyadenosine nucleosidase</fullName>
        <shortName evidence="1">DOA nucleosidase</shortName>
        <shortName evidence="1">dAdo nucleosidase</shortName>
    </alternativeName>
    <alternativeName>
        <fullName evidence="1">5'-methylthioadenosine nucleosidase</fullName>
        <shortName evidence="1">MTA nucleosidase</shortName>
    </alternativeName>
    <alternativeName>
        <fullName evidence="1">S-adenosylhomocysteine nucleosidase</fullName>
        <shortName evidence="1">AdoHcy nucleosidase</shortName>
        <shortName evidence="1">SAH nucleosidase</shortName>
        <shortName evidence="1">SRH nucleosidase</shortName>
    </alternativeName>
</protein>
<evidence type="ECO:0000255" key="1">
    <source>
        <dbReference type="HAMAP-Rule" id="MF_01684"/>
    </source>
</evidence>
<name>MTNN_PSET1</name>
<accession>Q3ILJ7</accession>
<organism>
    <name type="scientific">Pseudoalteromonas translucida (strain TAC 125)</name>
    <dbReference type="NCBI Taxonomy" id="326442"/>
    <lineage>
        <taxon>Bacteria</taxon>
        <taxon>Pseudomonadati</taxon>
        <taxon>Pseudomonadota</taxon>
        <taxon>Gammaproteobacteria</taxon>
        <taxon>Alteromonadales</taxon>
        <taxon>Pseudoalteromonadaceae</taxon>
        <taxon>Pseudoalteromonas</taxon>
    </lineage>
</organism>
<comment type="function">
    <text evidence="1">Catalyzes the irreversible cleavage of the glycosidic bond in both 5'-methylthioadenosine (MTA) and S-adenosylhomocysteine (SAH/AdoHcy) to adenine and the corresponding thioribose, 5'-methylthioribose and S-ribosylhomocysteine, respectively. Also cleaves 5'-deoxyadenosine, a toxic by-product of radical S-adenosylmethionine (SAM) enzymes, into 5-deoxyribose and adenine.</text>
</comment>
<comment type="catalytic activity">
    <reaction evidence="1">
        <text>S-adenosyl-L-homocysteine + H2O = S-(5-deoxy-D-ribos-5-yl)-L-homocysteine + adenine</text>
        <dbReference type="Rhea" id="RHEA:17805"/>
        <dbReference type="ChEBI" id="CHEBI:15377"/>
        <dbReference type="ChEBI" id="CHEBI:16708"/>
        <dbReference type="ChEBI" id="CHEBI:57856"/>
        <dbReference type="ChEBI" id="CHEBI:58195"/>
        <dbReference type="EC" id="3.2.2.9"/>
    </reaction>
</comment>
<comment type="catalytic activity">
    <reaction evidence="1">
        <text>S-methyl-5'-thioadenosine + H2O = 5-(methylsulfanyl)-D-ribose + adenine</text>
        <dbReference type="Rhea" id="RHEA:13617"/>
        <dbReference type="ChEBI" id="CHEBI:15377"/>
        <dbReference type="ChEBI" id="CHEBI:16708"/>
        <dbReference type="ChEBI" id="CHEBI:17509"/>
        <dbReference type="ChEBI" id="CHEBI:78440"/>
        <dbReference type="EC" id="3.2.2.9"/>
    </reaction>
</comment>
<comment type="catalytic activity">
    <reaction evidence="1">
        <text>5'-deoxyadenosine + H2O = 5-deoxy-D-ribose + adenine</text>
        <dbReference type="Rhea" id="RHEA:29859"/>
        <dbReference type="ChEBI" id="CHEBI:15377"/>
        <dbReference type="ChEBI" id="CHEBI:16708"/>
        <dbReference type="ChEBI" id="CHEBI:17319"/>
        <dbReference type="ChEBI" id="CHEBI:149540"/>
        <dbReference type="EC" id="3.2.2.9"/>
    </reaction>
    <physiologicalReaction direction="left-to-right" evidence="1">
        <dbReference type="Rhea" id="RHEA:29860"/>
    </physiologicalReaction>
</comment>
<comment type="pathway">
    <text evidence="1">Amino-acid biosynthesis; L-methionine biosynthesis via salvage pathway; S-methyl-5-thio-alpha-D-ribose 1-phosphate from S-methyl-5'-thioadenosine (hydrolase route): step 1/2.</text>
</comment>
<comment type="similarity">
    <text evidence="1">Belongs to the PNP/UDP phosphorylase family. MtnN subfamily.</text>
</comment>
<gene>
    <name evidence="1" type="primary">mtnN</name>
    <name type="ordered locus">PSHAa0547</name>
</gene>
<reference key="1">
    <citation type="journal article" date="2005" name="Genome Res.">
        <title>Coping with cold: the genome of the versatile marine Antarctica bacterium Pseudoalteromonas haloplanktis TAC125.</title>
        <authorList>
            <person name="Medigue C."/>
            <person name="Krin E."/>
            <person name="Pascal G."/>
            <person name="Barbe V."/>
            <person name="Bernsel A."/>
            <person name="Bertin P.N."/>
            <person name="Cheung F."/>
            <person name="Cruveiller S."/>
            <person name="D'Amico S."/>
            <person name="Duilio A."/>
            <person name="Fang G."/>
            <person name="Feller G."/>
            <person name="Ho C."/>
            <person name="Mangenot S."/>
            <person name="Marino G."/>
            <person name="Nilsson J."/>
            <person name="Parrilli E."/>
            <person name="Rocha E.P.C."/>
            <person name="Rouy Z."/>
            <person name="Sekowska A."/>
            <person name="Tutino M.L."/>
            <person name="Vallenet D."/>
            <person name="von Heijne G."/>
            <person name="Danchin A."/>
        </authorList>
    </citation>
    <scope>NUCLEOTIDE SEQUENCE [LARGE SCALE GENOMIC DNA]</scope>
    <source>
        <strain>TAC 125</strain>
    </source>
</reference>
<keyword id="KW-0028">Amino-acid biosynthesis</keyword>
<keyword id="KW-0378">Hydrolase</keyword>
<keyword id="KW-0486">Methionine biosynthesis</keyword>
<keyword id="KW-1185">Reference proteome</keyword>
<proteinExistence type="inferred from homology"/>